<proteinExistence type="evidence at protein level"/>
<organism>
    <name type="scientific">Methanothermobacter marburgensis (strain ATCC BAA-927 / DSM 2133 / JCM 14651 / NBRC 100331 / OCM 82 / Marburg)</name>
    <name type="common">Methanobacterium thermoautotrophicum</name>
    <dbReference type="NCBI Taxonomy" id="79929"/>
    <lineage>
        <taxon>Archaea</taxon>
        <taxon>Methanobacteriati</taxon>
        <taxon>Methanobacteriota</taxon>
        <taxon>Methanomada group</taxon>
        <taxon>Methanobacteria</taxon>
        <taxon>Methanobacteriales</taxon>
        <taxon>Methanobacteriaceae</taxon>
        <taxon>Methanothermobacter</taxon>
    </lineage>
</organism>
<dbReference type="EC" id="1.8.98.5" evidence="5 10"/>
<dbReference type="EMBL" id="X81134">
    <property type="protein sequence ID" value="CAA57039.1"/>
    <property type="molecule type" value="Genomic_DNA"/>
</dbReference>
<dbReference type="EMBL" id="CP001710">
    <property type="protein sequence ID" value="ADL59336.1"/>
    <property type="molecule type" value="Genomic_DNA"/>
</dbReference>
<dbReference type="EMBL" id="X92083">
    <property type="protein sequence ID" value="CAA63065.1"/>
    <property type="molecule type" value="Genomic_DNA"/>
</dbReference>
<dbReference type="PIR" id="S48720">
    <property type="entry name" value="S48720"/>
</dbReference>
<dbReference type="RefSeq" id="WP_013296546.1">
    <property type="nucleotide sequence ID" value="NC_014408.1"/>
</dbReference>
<dbReference type="SMR" id="Q50756"/>
<dbReference type="DIP" id="DIP-59606N"/>
<dbReference type="IntAct" id="Q50756">
    <property type="interactions" value="5"/>
</dbReference>
<dbReference type="STRING" id="79929.MTBMA_c17680"/>
<dbReference type="PaxDb" id="79929-MTBMA_c17680"/>
<dbReference type="GeneID" id="43707504"/>
<dbReference type="GeneID" id="9705479"/>
<dbReference type="KEGG" id="mmg:MTBMA_c17680"/>
<dbReference type="PATRIC" id="fig|79929.8.peg.1705"/>
<dbReference type="HOGENOM" id="CLU_020302_0_0_2"/>
<dbReference type="OrthoDB" id="32867at2157"/>
<dbReference type="BRENDA" id="1.8.98.5">
    <property type="organism ID" value="7427"/>
</dbReference>
<dbReference type="UniPathway" id="UPA00647">
    <property type="reaction ID" value="UER00700"/>
</dbReference>
<dbReference type="Proteomes" id="UP000000345">
    <property type="component" value="Chromosome"/>
</dbReference>
<dbReference type="GO" id="GO:0051539">
    <property type="term" value="F:4 iron, 4 sulfur cluster binding"/>
    <property type="evidence" value="ECO:0007669"/>
    <property type="project" value="UniProtKB-KW"/>
</dbReference>
<dbReference type="GO" id="GO:0051912">
    <property type="term" value="F:CoB--CoM heterodisulfide reductase activity"/>
    <property type="evidence" value="ECO:0000314"/>
    <property type="project" value="UniProtKB"/>
</dbReference>
<dbReference type="GO" id="GO:0046872">
    <property type="term" value="F:metal ion binding"/>
    <property type="evidence" value="ECO:0007669"/>
    <property type="project" value="UniProtKB-KW"/>
</dbReference>
<dbReference type="GO" id="GO:0015948">
    <property type="term" value="P:methanogenesis"/>
    <property type="evidence" value="ECO:0000314"/>
    <property type="project" value="UniProtKB"/>
</dbReference>
<dbReference type="FunFam" id="3.30.70.20:FF:000073">
    <property type="entry name" value="H(2):CoB-CoM heterodisulfide,ferredoxin reductase subunit A"/>
    <property type="match status" value="1"/>
</dbReference>
<dbReference type="FunFam" id="3.50.50.60:FF:000644">
    <property type="entry name" value="H(2):CoB-CoM heterodisulfide,ferredoxin reductase subunit A"/>
    <property type="match status" value="1"/>
</dbReference>
<dbReference type="Gene3D" id="3.30.70.20">
    <property type="match status" value="2"/>
</dbReference>
<dbReference type="Gene3D" id="3.50.50.60">
    <property type="entry name" value="FAD/NAD(P)-binding domain"/>
    <property type="match status" value="1"/>
</dbReference>
<dbReference type="InterPro" id="IPR017896">
    <property type="entry name" value="4Fe4S_Fe-S-bd"/>
</dbReference>
<dbReference type="InterPro" id="IPR017900">
    <property type="entry name" value="4Fe4S_Fe_S_CS"/>
</dbReference>
<dbReference type="InterPro" id="IPR007698">
    <property type="entry name" value="AlaDH/PNT_NAD(H)-bd"/>
</dbReference>
<dbReference type="InterPro" id="IPR036188">
    <property type="entry name" value="FAD/NAD-bd_sf"/>
</dbReference>
<dbReference type="InterPro" id="IPR023753">
    <property type="entry name" value="FAD/NAD-binding_dom"/>
</dbReference>
<dbReference type="InterPro" id="IPR039650">
    <property type="entry name" value="HdrA-like"/>
</dbReference>
<dbReference type="PANTHER" id="PTHR43498:SF1">
    <property type="entry name" value="COB--COM HETERODISULFIDE REDUCTASE IRON-SULFUR SUBUNIT A"/>
    <property type="match status" value="1"/>
</dbReference>
<dbReference type="PANTHER" id="PTHR43498">
    <property type="entry name" value="FERREDOXIN:COB-COM HETERODISULFIDE REDUCTASE SUBUNIT A"/>
    <property type="match status" value="1"/>
</dbReference>
<dbReference type="Pfam" id="PF01262">
    <property type="entry name" value="AlaDh_PNT_C"/>
    <property type="match status" value="1"/>
</dbReference>
<dbReference type="Pfam" id="PF00037">
    <property type="entry name" value="Fer4"/>
    <property type="match status" value="1"/>
</dbReference>
<dbReference type="Pfam" id="PF13237">
    <property type="entry name" value="Fer4_10"/>
    <property type="match status" value="1"/>
</dbReference>
<dbReference type="Pfam" id="PF07992">
    <property type="entry name" value="Pyr_redox_2"/>
    <property type="match status" value="1"/>
</dbReference>
<dbReference type="PRINTS" id="PR00411">
    <property type="entry name" value="PNDRDTASEI"/>
</dbReference>
<dbReference type="SUPFAM" id="SSF54862">
    <property type="entry name" value="4Fe-4S ferredoxins"/>
    <property type="match status" value="1"/>
</dbReference>
<dbReference type="SUPFAM" id="SSF51905">
    <property type="entry name" value="FAD/NAD(P)-binding domain"/>
    <property type="match status" value="1"/>
</dbReference>
<dbReference type="PROSITE" id="PS00198">
    <property type="entry name" value="4FE4S_FER_1"/>
    <property type="match status" value="4"/>
</dbReference>
<dbReference type="PROSITE" id="PS51379">
    <property type="entry name" value="4FE4S_FER_2"/>
    <property type="match status" value="4"/>
</dbReference>
<sequence>MAEEKKETMEEPKIGVYVCHCGVNIGGVVDVEAVRDYAAKLPNVVIAKDYKYYCSDPGQLEIQKDIKELGINRVVVAACSPRLHEPTFRRCVEEAGLNQFLFEFANIREHDSWVHMDNPEGATEKAKDLVRMAVAKARLLEPLEASKVSVDDKALVIGGGVAGIQAALDLADMGFKTYMVEKRPSISGRMGQLDKTFPTLDCSMCILAPKMVDVGKHDNIELITYAEVKEVDGYIGNFKVKIEKKPRYIDEELCTGCGSCVEVCPIEMPNYFDEGIGMTKAVYIPFPQAVPLCATIDKDYCIECMLCDEVCERGAVKHDQEPEEIEIEVGTIIVATGYDAYDPTEKLEYGYGRHTNVITGLELERMINASGPTDGKVLKPSDGEKPKRVAFIHCVGSRDEQIGKPYCSRVCCMYIMKNAQLIKDKMPDTEVTLYYMDIRAFGKGFEEFYKRSQEKYGIKFIRGRPAEVIENPDLTLTVRSEDTLLGKVTEYDYDMVVLGVGLVPPEGAETLRQTIGLSKSADGFLMEAHPKLRPVDTLTDGVYLAGVAQGPKDIPDAVAQASGAAARAAIPMVKGEVEIEPIIAVTDSDVCGGCEVCIELCPFGAISIEEGHANVNVALCKGCGTCVAACPSGAMDQQHFKTEQIMAQIEAALNEPASK</sequence>
<feature type="initiator methionine" description="Removed" evidence="6 7">
    <location>
        <position position="1"/>
    </location>
</feature>
<feature type="chain" id="PRO_0000150062" description="H(2):CoB-CoM heterodisulfide,ferredoxin reductase subunit A">
    <location>
        <begin position="2"/>
        <end position="659"/>
    </location>
</feature>
<feature type="domain" description="4Fe-4S ferredoxin-type 1" evidence="2">
    <location>
        <begin position="244"/>
        <end position="274"/>
    </location>
</feature>
<feature type="domain" description="4Fe-4S ferredoxin-type 2" evidence="2">
    <location>
        <begin position="292"/>
        <end position="321"/>
    </location>
</feature>
<feature type="domain" description="4Fe-4S ferredoxin-type 3" evidence="2">
    <location>
        <begin position="581"/>
        <end position="610"/>
    </location>
</feature>
<feature type="domain" description="4Fe-4S ferredoxin-type 4" evidence="2">
    <location>
        <begin position="611"/>
        <end position="640"/>
    </location>
</feature>
<feature type="binding site" evidence="1">
    <location>
        <begin position="158"/>
        <end position="181"/>
    </location>
    <ligand>
        <name>FAD</name>
        <dbReference type="ChEBI" id="CHEBI:57692"/>
    </ligand>
</feature>
<feature type="binding site" evidence="2">
    <location>
        <position position="254"/>
    </location>
    <ligand>
        <name>[4Fe-4S] cluster</name>
        <dbReference type="ChEBI" id="CHEBI:49883"/>
        <label>1</label>
    </ligand>
</feature>
<feature type="binding site" evidence="2">
    <location>
        <position position="257"/>
    </location>
    <ligand>
        <name>[4Fe-4S] cluster</name>
        <dbReference type="ChEBI" id="CHEBI:49883"/>
        <label>1</label>
    </ligand>
</feature>
<feature type="binding site" evidence="2">
    <location>
        <position position="260"/>
    </location>
    <ligand>
        <name>[4Fe-4S] cluster</name>
        <dbReference type="ChEBI" id="CHEBI:49883"/>
        <label>1</label>
    </ligand>
</feature>
<feature type="binding site" evidence="2">
    <location>
        <position position="264"/>
    </location>
    <ligand>
        <name>[4Fe-4S] cluster</name>
        <dbReference type="ChEBI" id="CHEBI:49883"/>
        <label>2</label>
    </ligand>
</feature>
<feature type="binding site" evidence="2">
    <location>
        <position position="301"/>
    </location>
    <ligand>
        <name>[4Fe-4S] cluster</name>
        <dbReference type="ChEBI" id="CHEBI:49883"/>
        <label>2</label>
    </ligand>
</feature>
<feature type="binding site" evidence="2">
    <location>
        <position position="304"/>
    </location>
    <ligand>
        <name>[4Fe-4S] cluster</name>
        <dbReference type="ChEBI" id="CHEBI:49883"/>
        <label>2</label>
    </ligand>
</feature>
<feature type="binding site" evidence="2">
    <location>
        <position position="307"/>
    </location>
    <ligand>
        <name>[4Fe-4S] cluster</name>
        <dbReference type="ChEBI" id="CHEBI:49883"/>
        <label>2</label>
    </ligand>
</feature>
<feature type="binding site" evidence="2">
    <location>
        <position position="311"/>
    </location>
    <ligand>
        <name>[4Fe-4S] cluster</name>
        <dbReference type="ChEBI" id="CHEBI:49883"/>
        <label>1</label>
    </ligand>
</feature>
<feature type="binding site" evidence="2">
    <location>
        <position position="591"/>
    </location>
    <ligand>
        <name>[4Fe-4S] cluster</name>
        <dbReference type="ChEBI" id="CHEBI:49883"/>
        <label>3</label>
    </ligand>
</feature>
<feature type="binding site" evidence="2">
    <location>
        <position position="594"/>
    </location>
    <ligand>
        <name>[4Fe-4S] cluster</name>
        <dbReference type="ChEBI" id="CHEBI:49883"/>
        <label>3</label>
    </ligand>
</feature>
<feature type="binding site" evidence="2">
    <location>
        <position position="597"/>
    </location>
    <ligand>
        <name>[4Fe-4S] cluster</name>
        <dbReference type="ChEBI" id="CHEBI:49883"/>
        <label>3</label>
    </ligand>
</feature>
<feature type="binding site" evidence="2">
    <location>
        <position position="601"/>
    </location>
    <ligand>
        <name>[4Fe-4S] cluster</name>
        <dbReference type="ChEBI" id="CHEBI:49883"/>
        <label>4</label>
    </ligand>
</feature>
<feature type="binding site" evidence="2">
    <location>
        <position position="620"/>
    </location>
    <ligand>
        <name>[4Fe-4S] cluster</name>
        <dbReference type="ChEBI" id="CHEBI:49883"/>
        <label>4</label>
    </ligand>
</feature>
<feature type="binding site" evidence="2">
    <location>
        <position position="623"/>
    </location>
    <ligand>
        <name>[4Fe-4S] cluster</name>
        <dbReference type="ChEBI" id="CHEBI:49883"/>
        <label>4</label>
    </ligand>
</feature>
<feature type="binding site" evidence="2">
    <location>
        <position position="626"/>
    </location>
    <ligand>
        <name>[4Fe-4S] cluster</name>
        <dbReference type="ChEBI" id="CHEBI:49883"/>
        <label>4</label>
    </ligand>
</feature>
<feature type="binding site" evidence="2">
    <location>
        <position position="630"/>
    </location>
    <ligand>
        <name>[4Fe-4S] cluster</name>
        <dbReference type="ChEBI" id="CHEBI:49883"/>
        <label>3</label>
    </ligand>
</feature>
<name>HDRA_METTM</name>
<accession>Q50756</accession>
<accession>D9PYN8</accession>
<accession>Q50752</accession>
<protein>
    <recommendedName>
        <fullName evidence="8">H(2):CoB-CoM heterodisulfide,ferredoxin reductase subunit A</fullName>
        <ecNumber evidence="5 10">1.8.98.5</ecNumber>
    </recommendedName>
    <alternativeName>
        <fullName evidence="8">CoB--CoM heterodisulfide reductase iron-sulfur subunit A</fullName>
    </alternativeName>
</protein>
<comment type="function">
    <text evidence="4 5 7">Part of a complex that catalyzes the reversible reduction of CoM-S-S-CoB to the thiol-coenzymes H-S-CoM (coenzyme M) and H-S-CoB (coenzyme B).</text>
</comment>
<comment type="catalytic activity">
    <reaction evidence="5 10">
        <text>coenzyme B + coenzyme M + 2 reduced [2Fe-2S]-[ferredoxin] + 2 H(+) = coenzyme M-coenzyme B heterodisulfide + 2 H2 + 2 oxidized [2Fe-2S]-[ferredoxin]</text>
        <dbReference type="Rhea" id="RHEA:55748"/>
        <dbReference type="Rhea" id="RHEA-COMP:10000"/>
        <dbReference type="Rhea" id="RHEA-COMP:10001"/>
        <dbReference type="ChEBI" id="CHEBI:15378"/>
        <dbReference type="ChEBI" id="CHEBI:18276"/>
        <dbReference type="ChEBI" id="CHEBI:33737"/>
        <dbReference type="ChEBI" id="CHEBI:33738"/>
        <dbReference type="ChEBI" id="CHEBI:58319"/>
        <dbReference type="ChEBI" id="CHEBI:58411"/>
        <dbReference type="ChEBI" id="CHEBI:58596"/>
        <dbReference type="EC" id="1.8.98.5"/>
    </reaction>
</comment>
<comment type="cofactor">
    <cofactor evidence="2 9">
        <name>[4Fe-4S] cluster</name>
        <dbReference type="ChEBI" id="CHEBI:49883"/>
    </cofactor>
    <text evidence="2 9">Binds 4 [4Fe-4S] clusters per subunit.</text>
</comment>
<comment type="cofactor">
    <cofactor evidence="9">
        <name>FAD</name>
        <dbReference type="ChEBI" id="CHEBI:57692"/>
    </cofactor>
</comment>
<comment type="pathway">
    <text evidence="8">Cofactor metabolism; coenzyme M-coenzyme B heterodisulfide reduction; coenzyme B and coenzyme M from coenzyme M-coenzyme B heterodisulfide: step 1/1.</text>
</comment>
<comment type="subunit">
    <text evidence="3 4 5 7">The heterodisulfide reductase is composed of three subunits; HdrA, HdrB and HdrC. It forms a complex with the F420-non-reducing hydrogenase (Mvh), which provides the reducing equivalents to the heterodisulfide reductase.</text>
</comment>
<comment type="similarity">
    <text evidence="8">Belongs to the HdrA family.</text>
</comment>
<keyword id="KW-0004">4Fe-4S</keyword>
<keyword id="KW-0903">Direct protein sequencing</keyword>
<keyword id="KW-0274">FAD</keyword>
<keyword id="KW-0285">Flavoprotein</keyword>
<keyword id="KW-0408">Iron</keyword>
<keyword id="KW-0411">Iron-sulfur</keyword>
<keyword id="KW-0479">Metal-binding</keyword>
<keyword id="KW-0484">Methanogenesis</keyword>
<keyword id="KW-0560">Oxidoreductase</keyword>
<keyword id="KW-0677">Repeat</keyword>
<evidence type="ECO:0000255" key="1"/>
<evidence type="ECO:0000255" key="2">
    <source>
        <dbReference type="PROSITE-ProRule" id="PRU00711"/>
    </source>
</evidence>
<evidence type="ECO:0000269" key="3">
    <source>
    </source>
</evidence>
<evidence type="ECO:0000269" key="4">
    <source>
    </source>
</evidence>
<evidence type="ECO:0000269" key="5">
    <source>
    </source>
</evidence>
<evidence type="ECO:0000269" key="6">
    <source>
    </source>
</evidence>
<evidence type="ECO:0000269" key="7">
    <source>
    </source>
</evidence>
<evidence type="ECO:0000305" key="8"/>
<evidence type="ECO:0000305" key="9">
    <source>
    </source>
</evidence>
<evidence type="ECO:0000305" key="10">
    <source>
    </source>
</evidence>
<reference evidence="8" key="1">
    <citation type="journal article" date="1994" name="Eur. J. Biochem.">
        <title>The heterodisulfide reductase from Methanobacterium thermoautotrophicum contains sequence motifs characteristic of pyridine-nucleotide-dependent thioredoxin reductases.</title>
        <authorList>
            <person name="Hedderich R."/>
            <person name="Koch J."/>
            <person name="Linder D."/>
            <person name="Thauer R.K."/>
        </authorList>
    </citation>
    <scope>NUCLEOTIDE SEQUENCE [GENOMIC DNA]</scope>
    <scope>PROTEIN SEQUENCE OF 2-18; 210-226; 425-435; 455-459 AND 641-650</scope>
    <source>
        <strain>ATCC BAA-927 / DSM 2133 / JCM 14651 / NBRC 100331 / OCM 82 / Marburg</strain>
    </source>
</reference>
<reference key="2">
    <citation type="journal article" date="2010" name="J. Bacteriol.">
        <title>Complete genome sequence of Methanothermobacter marburgensis, a methanoarchaeon model organism.</title>
        <authorList>
            <person name="Liesegang H."/>
            <person name="Kaster A.K."/>
            <person name="Wiezer A."/>
            <person name="Goenrich M."/>
            <person name="Wollherr A."/>
            <person name="Seedorf H."/>
            <person name="Gottschalk G."/>
            <person name="Thauer R.K."/>
        </authorList>
    </citation>
    <scope>NUCLEOTIDE SEQUENCE [LARGE SCALE GENOMIC DNA]</scope>
    <source>
        <strain>ATCC BAA-927 / DSM 2133 / JCM 14651 / NBRC 100331 / OCM 82 / Marburg</strain>
    </source>
</reference>
<reference evidence="8" key="3">
    <citation type="journal article" date="1996" name="Eur. J. Biochem.">
        <title>Primary structure of cyclohydrolase (Mch) from Methanobacterium thermoautotrophicum (strain Marburg) and functional expression of the mch gene in Escherichia coli.</title>
        <authorList>
            <person name="Vaupel M."/>
            <person name="Dietz H."/>
            <person name="Linder D."/>
            <person name="Thauer R.K."/>
        </authorList>
    </citation>
    <scope>NUCLEOTIDE SEQUENCE [GENOMIC DNA] OF 651-659</scope>
    <source>
        <strain>ATCC BAA-927 / DSM 2133 / JCM 14651 / NBRC 100331 / OCM 82 / Marburg</strain>
    </source>
</reference>
<reference key="4">
    <citation type="journal article" date="1994" name="Eur. J. Biochem.">
        <title>H2: heterodisulfide oxidoreductase complex from Methanobacterium thermoautotrophicum. Composition and properties.</title>
        <authorList>
            <person name="Setzke E."/>
            <person name="Hedderich R."/>
            <person name="Heiden S."/>
            <person name="Thauer R.K."/>
        </authorList>
    </citation>
    <scope>PROTEIN SEQUENCE OF 2-18</scope>
    <scope>FUNCTION</scope>
    <scope>CATALYTIC ACTIVITY</scope>
    <scope>SUBUNIT</scope>
    <scope>ASSOCIATION WITH F420-NON-REDUCING HYDROGENASE</scope>
    <source>
        <strain>ATCC BAA-927 / DSM 2133 / JCM 14651 / NBRC 100331 / OCM 82 / Marburg</strain>
    </source>
</reference>
<reference evidence="8" key="5">
    <citation type="journal article" date="1990" name="Eur. J. Biochem.">
        <title>Purification and properties of heterodisulfide reductase from Methanobacterium thermoautotrophicum (strain Marburg).</title>
        <authorList>
            <person name="Hedderich R."/>
            <person name="Berkessel A."/>
            <person name="Thauer R.K."/>
        </authorList>
    </citation>
    <scope>FUNCTION</scope>
    <scope>COFACTOR</scope>
    <scope>SUBUNIT</scope>
    <source>
        <strain>ATCC BAA-927 / DSM 2133 / JCM 14651 / NBRC 100331 / OCM 82 / Marburg</strain>
    </source>
</reference>
<reference key="6">
    <citation type="journal article" date="2003" name="Arch. Microbiol.">
        <title>Physiological role of the F420-non-reducing hydrogenase (Mvh) from Methanothermobacter marburgensis.</title>
        <authorList>
            <person name="Stojanowic A."/>
            <person name="Mander G.J."/>
            <person name="Duin E.C."/>
            <person name="Hedderich R."/>
        </authorList>
    </citation>
    <scope>ASSOCIATION WITH F420-NON-REDUCING HYDROGENASE</scope>
    <source>
        <strain>ATCC BAA-927 / DSM 2133 / JCM 14651 / NBRC 100331 / OCM 82 / Marburg</strain>
    </source>
</reference>
<reference key="7">
    <citation type="journal article" date="2011" name="Proc. Natl. Acad. Sci. U.S.A.">
        <title>Coupling of ferredoxin and heterodisulfide reduction via electron bifurcation in hydrogenotrophic methanogenic archaea.</title>
        <authorList>
            <person name="Kaster A.K."/>
            <person name="Moll J."/>
            <person name="Parey K."/>
            <person name="Thauer R.K."/>
        </authorList>
    </citation>
    <scope>FUNCTION</scope>
    <scope>CATALYTIC ACTIVITY</scope>
    <scope>SUBUNIT</scope>
    <source>
        <strain>ATCC BAA-927 / DSM 2133 / JCM 14651 / NBRC 100331 / OCM 82 / Marburg</strain>
    </source>
</reference>
<gene>
    <name type="primary">hdrA</name>
    <name type="ordered locus">MTBMA_c17680</name>
</gene>